<gene>
    <name evidence="1" type="primary">cas9</name>
</gene>
<comment type="function">
    <text evidence="1 2 3">CRISPR (clustered regularly interspaced short palindromic repeat) is an adaptive immune system that provides protection against mobile genetic elements (viruses, transposable elements and conjugative plasmids). CRISPR clusters contain spacers, sequences complementary to antecedent mobile elements, and target invading nucleic acids. CRISPR clusters are transcribed and processed into CRISPR RNA (crRNA). In type II CRISPR systems correct processing of pre-crRNA requires a trans-encoded small RNA (tracrRNA), endogenous ribonuclease 3 (rnc) and this protein. The tracrRNA serves as a guide for ribonuclease 3-aided processing of pre-crRNA. Subsequently Cas9/crRNA/tracrRNA endonucleolytically cleaves linear or circular dsDNA target complementary to the spacer; Cas9 is inactive in the absence of the 2 guide RNAs (gRNA). Cas9 recognizes the protospacer adjacent motif (PAM) in the CRISPR repeat sequences to help distinguish self versus nonself, as targets within the bacterial CRISPR locus do not have PAMs. PAM recognition is also required for catalytic activity.</text>
</comment>
<comment type="cofactor">
    <cofactor evidence="1">
        <name>Mg(2+)</name>
        <dbReference type="ChEBI" id="CHEBI:18420"/>
    </cofactor>
</comment>
<comment type="subunit">
    <text evidence="1">Monomer. Binds crRNA and tracrRNA.</text>
</comment>
<comment type="domain">
    <text evidence="1 4">Has a bilobed architecture with a recognition lobe (REC, residues 41-425) and a discontinuous nuclease lobe (NUC, residues 1-40 and 453-1053); the crRNA-target DNA lies in a channel between the 2 lobes (PubMed:26317473). The NUC lobe has 2 endonuclease domains. The discontinuous RuvC-like domain in NUC cleaves the target DNA noncomplementary to crRNA while the HNH nuclease domain cleaves the target DNA complementary to crRNA (PubMed:26317473).</text>
</comment>
<comment type="biotechnology">
    <text evidence="2 3">Coexpression of Cas9 with an artificial sgRNA which fuses crRNA with the tracrRNA in human cells has shown it is possible to target and modify DNA sequences of interest (PubMed:25830891, PubMed:26098369). The smaller size of Cas9 from this organism (1053 residues versus 1368 for Streptococcus pyogenes) makes it easier to package the gene in an adeno-associated virus for delivery to 5-6 week old C57/BL6 mice; 2 different target genes were modifed as desired (PubMed:25830891).</text>
</comment>
<comment type="similarity">
    <text evidence="1">Belongs to the CRISPR-associated Cas9 family. Subtype II-A subfamily.</text>
</comment>
<reference key="1">
    <citation type="journal article" date="2013" name="Antimicrob. Agents Chemother.">
        <title>Emergence of sequence type 779 methicillin-resistant Staphylococcus aureus harboring a novel pseudo Staphylococcal cassette chromosome mec (SCCmec)-SCC-SCCCRISPR composite element in Irish hospitals.</title>
        <authorList>
            <person name="Kinnevey P.M."/>
            <person name="Shore A.C."/>
            <person name="Brennan G.I."/>
            <person name="Sullivan D.J."/>
            <person name="Ehricht R."/>
            <person name="Monecke S."/>
            <person name="Slickers P."/>
            <person name="Coleman D.C."/>
        </authorList>
    </citation>
    <scope>NUCLEOTIDE SEQUENCE [GENOMIC DNA]</scope>
    <source>
        <strain>M06/0171</strain>
    </source>
</reference>
<reference key="2">
    <citation type="journal article" date="2015" name="Nature">
        <title>In vivo genome editing using Staphylococcus aureus Cas9.</title>
        <authorList>
            <person name="Ran F.A."/>
            <person name="Cong L."/>
            <person name="Yan W.X."/>
            <person name="Scott D.A."/>
            <person name="Gootenberg J.S."/>
            <person name="Kriz A.J."/>
            <person name="Zetsche B."/>
            <person name="Shalem O."/>
            <person name="Wu X."/>
            <person name="Makarova K.S."/>
            <person name="Koonin E.V."/>
            <person name="Sharp P.A."/>
            <person name="Zhang F."/>
        </authorList>
    </citation>
    <scope>FUNCTION</scope>
    <scope>BIOTECHNOLOGY IN HUMAN CELLS AND MICE</scope>
    <scope>DNA-BINDING</scope>
</reference>
<reference key="3">
    <citation type="journal article" date="2015" name="Nature">
        <title>Engineered CRISPR-Cas9 nucleases with altered PAM specificities.</title>
        <authorList>
            <person name="Kleinstiver B.P."/>
            <person name="Prew M.S."/>
            <person name="Tsai S.Q."/>
            <person name="Topkar V.V."/>
            <person name="Nguyen N.T."/>
            <person name="Zheng Z."/>
            <person name="Gonzales A.P."/>
            <person name="Li Z."/>
            <person name="Peterson R.T."/>
            <person name="Yeh J.R."/>
            <person name="Aryee M.J."/>
            <person name="Joung J.K."/>
        </authorList>
    </citation>
    <scope>FUNCTION</scope>
    <scope>BIOTECHNOLOGY IN HUMAN CELLS</scope>
</reference>
<reference key="4">
    <citation type="journal article" date="2023" name="Nat. Commun.">
        <title>Assessing and advancing the safety of CRISPR-Cas tools: from DNA to RNA editing.</title>
        <authorList>
            <person name="Tao J."/>
            <person name="Bauer D.E."/>
            <person name="Chiarle R."/>
        </authorList>
    </citation>
    <scope>REVIEW ON SAFETY OF GENOME EDITING TOOLS</scope>
</reference>
<reference key="5">
    <citation type="journal article" date="2015" name="Cell">
        <title>Crystal structure of Staphylococcus aureus Cas9.</title>
        <authorList>
            <person name="Nishimasu H."/>
            <person name="Cong L."/>
            <person name="Yan W.X."/>
            <person name="Ran F.A."/>
            <person name="Zetsche B."/>
            <person name="Li Y."/>
            <person name="Kurabayashi A."/>
            <person name="Ishitani R."/>
            <person name="Zhang F."/>
            <person name="Nureki O."/>
        </authorList>
    </citation>
    <scope>X-RAY CRYSTALLOGRAPHY (2.60 ANGSTROMS) IN COMPLEX WITH SGRNA AND SINGLE-STRAND TARGET DNA</scope>
    <scope>ACTIVE SITES</scope>
    <scope>DOMAIN</scope>
    <scope>BIOTECHNOLOGY</scope>
    <scope>MUTAGENESIS OF ASP-10; GLU-477; HIS-557; ASN-580; HIS-701; ASP-704; THR-787; ASN-985; ASN-986; ARG-991; GLU-993 AND ARG-1015</scope>
    <scope>DNA-BINDING</scope>
    <scope>RNA-BINDING</scope>
</reference>
<feature type="chain" id="PRO_0000436103" description="CRISPR-associated endonuclease Cas9">
    <location>
        <begin position="1"/>
        <end position="1053"/>
    </location>
</feature>
<feature type="domain" description="HNH Cas9-type" evidence="1">
    <location>
        <begin position="480"/>
        <end position="646"/>
    </location>
</feature>
<feature type="region of interest" description="RuvC-I" evidence="6">
    <location>
        <begin position="1"/>
        <end position="41"/>
    </location>
</feature>
<feature type="region of interest" description="Recognition lobe" evidence="6">
    <location>
        <begin position="41"/>
        <end position="426"/>
    </location>
</feature>
<feature type="region of interest" description="RuvC-II" evidence="6">
    <location>
        <begin position="435"/>
        <end position="481"/>
    </location>
</feature>
<feature type="region of interest" description="RuvC-III" evidence="6">
    <location>
        <begin position="650"/>
        <end position="775"/>
    </location>
</feature>
<feature type="region of interest" description="PAM substrate-binding" evidence="4">
    <location>
        <begin position="882"/>
        <end position="889"/>
    </location>
</feature>
<feature type="region of interest" description="PAM-interacting domain (PI)" evidence="6">
    <location>
        <begin position="910"/>
        <end position="1053"/>
    </location>
</feature>
<feature type="region of interest" description="PAM substrate-binding" evidence="4">
    <location>
        <begin position="985"/>
        <end position="993"/>
    </location>
</feature>
<feature type="active site" description="For RuvC-like nuclease domain" evidence="6">
    <location>
        <position position="10"/>
    </location>
</feature>
<feature type="active site" description="Proton acceptor for HNH nuclease domain" evidence="6">
    <location>
        <position position="557"/>
    </location>
</feature>
<feature type="binding site" evidence="1">
    <location>
        <position position="10"/>
    </location>
    <ligand>
        <name>Mg(2+)</name>
        <dbReference type="ChEBI" id="CHEBI:18420"/>
        <label>1</label>
    </ligand>
</feature>
<feature type="binding site" evidence="1">
    <location>
        <position position="10"/>
    </location>
    <ligand>
        <name>Mg(2+)</name>
        <dbReference type="ChEBI" id="CHEBI:18420"/>
        <label>2</label>
    </ligand>
</feature>
<feature type="binding site" evidence="1">
    <location>
        <position position="477"/>
    </location>
    <ligand>
        <name>Mg(2+)</name>
        <dbReference type="ChEBI" id="CHEBI:18420"/>
        <label>1</label>
    </ligand>
</feature>
<feature type="binding site" evidence="1">
    <location>
        <position position="481"/>
    </location>
    <ligand>
        <name>Mg(2+)</name>
        <dbReference type="ChEBI" id="CHEBI:18420"/>
        <label>1</label>
    </ligand>
</feature>
<feature type="binding site" evidence="1">
    <location>
        <position position="481"/>
    </location>
    <ligand>
        <name>Mg(2+)</name>
        <dbReference type="ChEBI" id="CHEBI:18420"/>
        <label>2</label>
    </ligand>
</feature>
<feature type="binding site" evidence="1">
    <location>
        <position position="701"/>
    </location>
    <ligand>
        <name>Mg(2+)</name>
        <dbReference type="ChEBI" id="CHEBI:18420"/>
        <label>2</label>
    </ligand>
</feature>
<feature type="binding site" evidence="4">
    <location>
        <position position="789"/>
    </location>
    <ligand>
        <name>RNA</name>
        <dbReference type="ChEBI" id="CHEBI:33697"/>
    </ligand>
    <ligandPart>
        <name>PAM RNA</name>
    </ligandPart>
</feature>
<feature type="mutagenesis site" description="Target DNA not cleaved." evidence="4">
    <original>D</original>
    <variation>A</variation>
    <location>
        <position position="10"/>
    </location>
</feature>
<feature type="mutagenesis site" description="Target DNA not cleaved." evidence="4">
    <original>E</original>
    <variation>A</variation>
    <location>
        <position position="477"/>
    </location>
</feature>
<feature type="mutagenesis site" description="Target DNA not cleaved." evidence="4">
    <original>H</original>
    <variation>A</variation>
    <location>
        <position position="557"/>
    </location>
</feature>
<feature type="mutagenesis site" description="Target DNA not cleaved." evidence="4">
    <original>N</original>
    <variation>A</variation>
    <location>
        <position position="580"/>
    </location>
</feature>
<feature type="mutagenesis site" description="Target DNA not cleaved." evidence="4">
    <original>H</original>
    <variation>A</variation>
    <location>
        <position position="701"/>
    </location>
</feature>
<feature type="mutagenesis site" description="Target DNA not cleaved." evidence="4">
    <original>D</original>
    <variation>A</variation>
    <location>
        <position position="704"/>
    </location>
</feature>
<feature type="mutagenesis site" description="60% target DNA cleaved." evidence="4">
    <original>T</original>
    <variation>A</variation>
    <location>
        <position position="787"/>
    </location>
</feature>
<feature type="mutagenesis site" description="40% target DNA cleaved." evidence="4">
    <original>N</original>
    <variation>A</variation>
    <location>
        <position position="985"/>
    </location>
</feature>
<feature type="mutagenesis site" description="75% target DNA cleaved." evidence="4">
    <original>N</original>
    <variation>A</variation>
    <location>
        <position position="986"/>
    </location>
</feature>
<feature type="mutagenesis site" description="20% target DNA cleaved." evidence="4">
    <original>R</original>
    <variation>A</variation>
    <location>
        <position position="991"/>
    </location>
</feature>
<feature type="mutagenesis site" description="50% target DNA cleaved." evidence="4">
    <original>E</original>
    <variation>A</variation>
    <location>
        <position position="993"/>
    </location>
</feature>
<feature type="mutagenesis site" description="5% target DNA cleaved." evidence="4">
    <original>R</original>
    <variation>A</variation>
    <location>
        <position position="1015"/>
    </location>
</feature>
<feature type="strand" evidence="8">
    <location>
        <begin position="5"/>
        <end position="11"/>
    </location>
</feature>
<feature type="strand" evidence="8">
    <location>
        <begin position="13"/>
        <end position="22"/>
    </location>
</feature>
<feature type="turn" evidence="8">
    <location>
        <begin position="23"/>
        <end position="25"/>
    </location>
</feature>
<feature type="strand" evidence="8">
    <location>
        <begin position="28"/>
        <end position="35"/>
    </location>
</feature>
<feature type="helix" evidence="8">
    <location>
        <begin position="41"/>
        <end position="73"/>
    </location>
</feature>
<feature type="helix" evidence="8">
    <location>
        <begin position="88"/>
        <end position="95"/>
    </location>
</feature>
<feature type="helix" evidence="8">
    <location>
        <begin position="102"/>
        <end position="114"/>
    </location>
</feature>
<feature type="strand" evidence="8">
    <location>
        <begin position="118"/>
        <end position="121"/>
    </location>
</feature>
<feature type="strand" evidence="8">
    <location>
        <begin position="130"/>
        <end position="132"/>
    </location>
</feature>
<feature type="helix" evidence="8">
    <location>
        <begin position="134"/>
        <end position="144"/>
    </location>
</feature>
<feature type="turn" evidence="8">
    <location>
        <begin position="145"/>
        <end position="147"/>
    </location>
</feature>
<feature type="helix" evidence="8">
    <location>
        <begin position="150"/>
        <end position="161"/>
    </location>
</feature>
<feature type="helix" evidence="8">
    <location>
        <begin position="167"/>
        <end position="169"/>
    </location>
</feature>
<feature type="helix" evidence="8">
    <location>
        <begin position="173"/>
        <end position="187"/>
    </location>
</feature>
<feature type="turn" evidence="8">
    <location>
        <begin position="188"/>
        <end position="190"/>
    </location>
</feature>
<feature type="helix" evidence="8">
    <location>
        <begin position="195"/>
        <end position="206"/>
    </location>
</feature>
<feature type="turn" evidence="8">
    <location>
        <begin position="211"/>
        <end position="213"/>
    </location>
</feature>
<feature type="helix" evidence="8">
    <location>
        <begin position="226"/>
        <end position="233"/>
    </location>
</feature>
<feature type="strand" evidence="10">
    <location>
        <begin position="238"/>
        <end position="240"/>
    </location>
</feature>
<feature type="strand" evidence="10">
    <location>
        <begin position="243"/>
        <end position="247"/>
    </location>
</feature>
<feature type="strand" evidence="11">
    <location>
        <begin position="248"/>
        <end position="250"/>
    </location>
</feature>
<feature type="helix" evidence="8">
    <location>
        <begin position="251"/>
        <end position="263"/>
    </location>
</feature>
<feature type="strand" evidence="8">
    <location>
        <begin position="269"/>
        <end position="271"/>
    </location>
</feature>
<feature type="helix" evidence="8">
    <location>
        <begin position="277"/>
        <end position="286"/>
    </location>
</feature>
<feature type="turn" evidence="8">
    <location>
        <begin position="287"/>
        <end position="290"/>
    </location>
</feature>
<feature type="helix" evidence="8">
    <location>
        <begin position="296"/>
        <end position="303"/>
    </location>
</feature>
<feature type="helix" evidence="8">
    <location>
        <begin position="307"/>
        <end position="309"/>
    </location>
</feature>
<feature type="strand" evidence="7">
    <location>
        <begin position="317"/>
        <end position="319"/>
    </location>
</feature>
<feature type="helix" evidence="8">
    <location>
        <begin position="327"/>
        <end position="335"/>
    </location>
</feature>
<feature type="helix" evidence="8">
    <location>
        <begin position="339"/>
        <end position="342"/>
    </location>
</feature>
<feature type="helix" evidence="8">
    <location>
        <begin position="345"/>
        <end position="357"/>
    </location>
</feature>
<feature type="helix" evidence="8">
    <location>
        <begin position="361"/>
        <end position="369"/>
    </location>
</feature>
<feature type="helix" evidence="8">
    <location>
        <begin position="377"/>
        <end position="383"/>
    </location>
</feature>
<feature type="strand" evidence="10">
    <location>
        <begin position="392"/>
        <end position="396"/>
    </location>
</feature>
<feature type="helix" evidence="8">
    <location>
        <begin position="397"/>
        <end position="409"/>
    </location>
</feature>
<feature type="helix" evidence="8">
    <location>
        <begin position="414"/>
        <end position="420"/>
    </location>
</feature>
<feature type="helix" evidence="10">
    <location>
        <begin position="430"/>
        <end position="432"/>
    </location>
</feature>
<feature type="helix" evidence="8">
    <location>
        <begin position="438"/>
        <end position="440"/>
    </location>
</feature>
<feature type="helix" evidence="8">
    <location>
        <begin position="441"/>
        <end position="444"/>
    </location>
</feature>
<feature type="helix" evidence="8">
    <location>
        <begin position="448"/>
        <end position="468"/>
    </location>
</feature>
<feature type="strand" evidence="8">
    <location>
        <begin position="472"/>
        <end position="478"/>
    </location>
</feature>
<feature type="helix" evidence="8">
    <location>
        <begin position="486"/>
        <end position="493"/>
    </location>
</feature>
<feature type="helix" evidence="9">
    <location>
        <begin position="503"/>
        <end position="512"/>
    </location>
</feature>
<feature type="helix" evidence="9">
    <location>
        <begin position="514"/>
        <end position="529"/>
    </location>
</feature>
<feature type="turn" evidence="9">
    <location>
        <begin position="530"/>
        <end position="532"/>
    </location>
</feature>
<feature type="turn" evidence="9">
    <location>
        <begin position="535"/>
        <end position="537"/>
    </location>
</feature>
<feature type="helix" evidence="9">
    <location>
        <begin position="543"/>
        <end position="548"/>
    </location>
</feature>
<feature type="helix" evidence="9">
    <location>
        <begin position="550"/>
        <end position="552"/>
    </location>
</feature>
<feature type="strand" evidence="9">
    <location>
        <begin position="553"/>
        <end position="559"/>
    </location>
</feature>
<feature type="helix" evidence="9">
    <location>
        <begin position="561"/>
        <end position="564"/>
    </location>
</feature>
<feature type="helix" evidence="9">
    <location>
        <begin position="569"/>
        <end position="571"/>
    </location>
</feature>
<feature type="strand" evidence="9">
    <location>
        <begin position="572"/>
        <end position="576"/>
    </location>
</feature>
<feature type="helix" evidence="9">
    <location>
        <begin position="577"/>
        <end position="583"/>
    </location>
</feature>
<feature type="helix" evidence="9">
    <location>
        <begin position="588"/>
        <end position="592"/>
    </location>
</feature>
<feature type="strand" evidence="9">
    <location>
        <begin position="594"/>
        <end position="596"/>
    </location>
</feature>
<feature type="strand" evidence="11">
    <location>
        <begin position="597"/>
        <end position="599"/>
    </location>
</feature>
<feature type="helix" evidence="9">
    <location>
        <begin position="601"/>
        <end position="612"/>
    </location>
</feature>
<feature type="turn" evidence="9">
    <location>
        <begin position="613"/>
        <end position="615"/>
    </location>
</feature>
<feature type="helix" evidence="9">
    <location>
        <begin position="620"/>
        <end position="626"/>
    </location>
</feature>
<feature type="helix" evidence="9">
    <location>
        <begin position="635"/>
        <end position="643"/>
    </location>
</feature>
<feature type="helix" evidence="8">
    <location>
        <begin position="651"/>
        <end position="666"/>
    </location>
</feature>
<feature type="strand" evidence="8">
    <location>
        <begin position="672"/>
        <end position="675"/>
    </location>
</feature>
<feature type="helix" evidence="8">
    <location>
        <begin position="680"/>
        <end position="686"/>
    </location>
</feature>
<feature type="turn" evidence="8">
    <location>
        <begin position="687"/>
        <end position="689"/>
    </location>
</feature>
<feature type="helix" evidence="8">
    <location>
        <begin position="699"/>
        <end position="722"/>
    </location>
</feature>
<feature type="helix" evidence="8">
    <location>
        <begin position="744"/>
        <end position="755"/>
    </location>
</feature>
<feature type="helix" evidence="8">
    <location>
        <begin position="758"/>
        <end position="764"/>
    </location>
</feature>
<feature type="strand" evidence="8">
    <location>
        <begin position="769"/>
        <end position="773"/>
    </location>
</feature>
<feature type="strand" evidence="8">
    <location>
        <begin position="779"/>
        <end position="781"/>
    </location>
</feature>
<feature type="strand" evidence="8">
    <location>
        <begin position="789"/>
        <end position="793"/>
    </location>
</feature>
<feature type="strand" evidence="8">
    <location>
        <begin position="799"/>
        <end position="805"/>
    </location>
</feature>
<feature type="strand" evidence="11">
    <location>
        <begin position="810"/>
        <end position="812"/>
    </location>
</feature>
<feature type="helix" evidence="8">
    <location>
        <begin position="815"/>
        <end position="822"/>
    </location>
</feature>
<feature type="helix" evidence="8">
    <location>
        <begin position="824"/>
        <end position="826"/>
    </location>
</feature>
<feature type="helix" evidence="8">
    <location>
        <begin position="828"/>
        <end position="831"/>
    </location>
</feature>
<feature type="helix" evidence="8">
    <location>
        <begin position="834"/>
        <end position="846"/>
    </location>
</feature>
<feature type="turn" evidence="8">
    <location>
        <begin position="847"/>
        <end position="849"/>
    </location>
</feature>
<feature type="strand" evidence="10">
    <location>
        <begin position="850"/>
        <end position="852"/>
    </location>
</feature>
<feature type="helix" evidence="8">
    <location>
        <begin position="853"/>
        <end position="861"/>
    </location>
</feature>
<feature type="strand" evidence="10">
    <location>
        <begin position="870"/>
        <end position="872"/>
    </location>
</feature>
<feature type="strand" evidence="8">
    <location>
        <begin position="880"/>
        <end position="886"/>
    </location>
</feature>
<feature type="strand" evidence="10">
    <location>
        <begin position="889"/>
        <end position="892"/>
    </location>
</feature>
<feature type="helix" evidence="8">
    <location>
        <begin position="894"/>
        <end position="896"/>
    </location>
</feature>
<feature type="strand" evidence="8">
    <location>
        <begin position="904"/>
        <end position="906"/>
    </location>
</feature>
<feature type="strand" evidence="8">
    <location>
        <begin position="911"/>
        <end position="919"/>
    </location>
</feature>
<feature type="strand" evidence="8">
    <location>
        <begin position="922"/>
        <end position="929"/>
    </location>
</feature>
<feature type="helix" evidence="8">
    <location>
        <begin position="930"/>
        <end position="932"/>
    </location>
</feature>
<feature type="strand" evidence="8">
    <location>
        <begin position="933"/>
        <end position="935"/>
    </location>
</feature>
<feature type="strand" evidence="8">
    <location>
        <begin position="937"/>
        <end position="942"/>
    </location>
</feature>
<feature type="helix" evidence="8">
    <location>
        <begin position="944"/>
        <end position="953"/>
    </location>
</feature>
<feature type="strand" evidence="8">
    <location>
        <begin position="961"/>
        <end position="966"/>
    </location>
</feature>
<feature type="strand" evidence="8">
    <location>
        <begin position="971"/>
        <end position="974"/>
    </location>
</feature>
<feature type="strand" evidence="8">
    <location>
        <begin position="977"/>
        <end position="986"/>
    </location>
</feature>
<feature type="turn" evidence="8">
    <location>
        <begin position="987"/>
        <end position="990"/>
    </location>
</feature>
<feature type="strand" evidence="8">
    <location>
        <begin position="991"/>
        <end position="995"/>
    </location>
</feature>
<feature type="strand" evidence="8">
    <location>
        <begin position="997"/>
        <end position="999"/>
    </location>
</feature>
<feature type="helix" evidence="8">
    <location>
        <begin position="1001"/>
        <end position="1007"/>
    </location>
</feature>
<feature type="strand" evidence="8">
    <location>
        <begin position="1016"/>
        <end position="1019"/>
    </location>
</feature>
<feature type="strand" evidence="11">
    <location>
        <begin position="1021"/>
        <end position="1023"/>
    </location>
</feature>
<feature type="strand" evidence="8">
    <location>
        <begin position="1027"/>
        <end position="1032"/>
    </location>
</feature>
<feature type="strand" evidence="8">
    <location>
        <begin position="1038"/>
        <end position="1040"/>
    </location>
</feature>
<protein>
    <recommendedName>
        <fullName evidence="1">CRISPR-associated endonuclease Cas9</fullName>
        <ecNumber evidence="1">3.1.-.-</ecNumber>
    </recommendedName>
    <alternativeName>
        <fullName evidence="5">SaCas9</fullName>
    </alternativeName>
</protein>
<evidence type="ECO:0000255" key="1">
    <source>
        <dbReference type="HAMAP-Rule" id="MF_01480"/>
    </source>
</evidence>
<evidence type="ECO:0000269" key="2">
    <source>
    </source>
</evidence>
<evidence type="ECO:0000269" key="3">
    <source>
    </source>
</evidence>
<evidence type="ECO:0000269" key="4">
    <source>
    </source>
</evidence>
<evidence type="ECO:0000303" key="5">
    <source>
    </source>
</evidence>
<evidence type="ECO:0000305" key="6">
    <source>
    </source>
</evidence>
<evidence type="ECO:0007829" key="7">
    <source>
        <dbReference type="PDB" id="5CZZ"/>
    </source>
</evidence>
<evidence type="ECO:0007829" key="8">
    <source>
        <dbReference type="PDB" id="7EL1"/>
    </source>
</evidence>
<evidence type="ECO:0007829" key="9">
    <source>
        <dbReference type="PDB" id="7ENH"/>
    </source>
</evidence>
<evidence type="ECO:0007829" key="10">
    <source>
        <dbReference type="PDB" id="7ENI"/>
    </source>
</evidence>
<evidence type="ECO:0007829" key="11">
    <source>
        <dbReference type="PDB" id="8JFT"/>
    </source>
</evidence>
<keyword id="KW-0002">3D-structure</keyword>
<keyword id="KW-0051">Antiviral defense</keyword>
<keyword id="KW-0238">DNA-binding</keyword>
<keyword id="KW-0255">Endonuclease</keyword>
<keyword id="KW-0378">Hydrolase</keyword>
<keyword id="KW-0460">Magnesium</keyword>
<keyword id="KW-0464">Manganese</keyword>
<keyword id="KW-0479">Metal-binding</keyword>
<keyword id="KW-0540">Nuclease</keyword>
<keyword id="KW-0694">RNA-binding</keyword>
<accession>J7RUA5</accession>
<name>CAS9_STAAU</name>
<organism>
    <name type="scientific">Staphylococcus aureus</name>
    <dbReference type="NCBI Taxonomy" id="1280"/>
    <lineage>
        <taxon>Bacteria</taxon>
        <taxon>Bacillati</taxon>
        <taxon>Bacillota</taxon>
        <taxon>Bacilli</taxon>
        <taxon>Bacillales</taxon>
        <taxon>Staphylococcaceae</taxon>
        <taxon>Staphylococcus</taxon>
    </lineage>
</organism>
<sequence length="1053" mass="123949">MKRNYILGLDIGITSVGYGIIDYETRDVIDAGVRLFKEANVENNEGRRSKRGARRLKRRRRHRIQRVKKLLFDYNLLTDHSELSGINPYEARVKGLSQKLSEEEFSAALLHLAKRRGVHNVNEVEEDTGNELSTKEQISRNSKALEEKYVAELQLERLKKDGEVRGSINRFKTSDYVKEAKQLLKVQKAYHQLDQSFIDTYIDLLETRRTYYEGPGEGSPFGWKDIKEWYEMLMGHCTYFPEELRSVKYAYNADLYNALNDLNNLVITRDENEKLEYYEKFQIIENVFKQKKKPTLKQIAKEILVNEEDIKGYRVTSTGKPEFTNLKVYHDIKDITARKEIIENAELLDQIAKILTIYQSSEDIQEELTNLNSELTQEEIEQISNLKGYTGTHNLSLKAINLILDELWHTNDNQIAIFNRLKLVPKKVDLSQQKEIPTTLVDDFILSPVVKRSFIQSIKVINAIIKKYGLPNDIIIELAREKNSKDAQKMINEMQKRNRQTNERIEEIIRTTGKENAKYLIEKIKLHDMQEGKCLYSLEAIPLEDLLNNPFNYEVDHIIPRSVSFDNSFNNKVLVKQEENSKKGNRTPFQYLSSSDSKISYETFKKHILNLAKGKGRISKTKKEYLLEERDINRFSVQKDFINRNLVDTRYATRGLMNLLRSYFRVNNLDVKVKSINGGFTSFLRRKWKFKKERNKGYKHHAEDALIIANADFIFKEWKKLDKAKKVMENQMFEEKQAESMPEIETEQEYKEIFITPHQIKHIKDFKDYKYSHRVDKKPNRELINDTLYSTRKDDKGNTLIVNNLNGLYDKDNDKLKKLINKSPEKLLMYHHDPQTYQKLKLIMEQYGDEKNPLYKYYEETGNYLTKYSKKDNGPVIKKIKYYGNKLNAHLDITDDYPNSRNKVVKLSLKPYRFDVYLDNGVYKFVTVKNLDVIKKENYYEVNSKCYEEAKKLKKISNQAEFIASFYNNDLIKINGELYRVIGVNNDLLNRIEVNMIDITYREYLENMNDKRPPRIIKTIASKTQSIKKYSTDILGNLYEVKSKKHPQIIKKG</sequence>
<dbReference type="EC" id="3.1.-.-" evidence="1"/>
<dbReference type="EMBL" id="HE980450">
    <property type="protein sequence ID" value="CCK74173.1"/>
    <property type="molecule type" value="Genomic_DNA"/>
</dbReference>
<dbReference type="PDB" id="5AXW">
    <property type="method" value="X-ray"/>
    <property type="resolution" value="2.70 A"/>
    <property type="chains" value="A=1-1053"/>
</dbReference>
<dbReference type="PDB" id="5CZZ">
    <property type="method" value="X-ray"/>
    <property type="resolution" value="2.60 A"/>
    <property type="chains" value="A=1-1053"/>
</dbReference>
<dbReference type="PDB" id="7EL1">
    <property type="method" value="X-ray"/>
    <property type="resolution" value="2.22 A"/>
    <property type="chains" value="A=1-1053"/>
</dbReference>
<dbReference type="PDB" id="7ENH">
    <property type="method" value="X-ray"/>
    <property type="resolution" value="2.10 A"/>
    <property type="chains" value="A=481-646"/>
</dbReference>
<dbReference type="PDB" id="7ENI">
    <property type="method" value="X-ray"/>
    <property type="resolution" value="2.63 A"/>
    <property type="chains" value="A=1-1053"/>
</dbReference>
<dbReference type="PDB" id="7ENR">
    <property type="method" value="X-ray"/>
    <property type="resolution" value="4.21 A"/>
    <property type="chains" value="A=1-1053"/>
</dbReference>
<dbReference type="PDB" id="7VW3">
    <property type="method" value="EM"/>
    <property type="resolution" value="3.80 A"/>
    <property type="chains" value="A=2-1053"/>
</dbReference>
<dbReference type="PDB" id="8JFT">
    <property type="method" value="EM"/>
    <property type="resolution" value="3.31 A"/>
    <property type="chains" value="A=1-1053"/>
</dbReference>
<dbReference type="PDB" id="8JG9">
    <property type="method" value="EM"/>
    <property type="resolution" value="3.82 A"/>
    <property type="chains" value="A/D=1-1053"/>
</dbReference>
<dbReference type="PDB" id="8Y0D">
    <property type="method" value="X-ray"/>
    <property type="resolution" value="3.92 A"/>
    <property type="chains" value="A=1-1053"/>
</dbReference>
<dbReference type="PDBsum" id="5AXW"/>
<dbReference type="PDBsum" id="5CZZ"/>
<dbReference type="PDBsum" id="7EL1"/>
<dbReference type="PDBsum" id="7ENH"/>
<dbReference type="PDBsum" id="7ENI"/>
<dbReference type="PDBsum" id="7ENR"/>
<dbReference type="PDBsum" id="7VW3"/>
<dbReference type="PDBsum" id="8JFT"/>
<dbReference type="PDBsum" id="8JG9"/>
<dbReference type="PDBsum" id="8Y0D"/>
<dbReference type="EMDB" id="EMD-36217"/>
<dbReference type="EMDB" id="EMD-36225"/>
<dbReference type="SMR" id="J7RUA5"/>
<dbReference type="EvolutionaryTrace" id="J7RUA5"/>
<dbReference type="GO" id="GO:0003677">
    <property type="term" value="F:DNA binding"/>
    <property type="evidence" value="ECO:0007669"/>
    <property type="project" value="UniProtKB-KW"/>
</dbReference>
<dbReference type="GO" id="GO:0004519">
    <property type="term" value="F:endonuclease activity"/>
    <property type="evidence" value="ECO:0007669"/>
    <property type="project" value="UniProtKB-UniRule"/>
</dbReference>
<dbReference type="GO" id="GO:0046872">
    <property type="term" value="F:metal ion binding"/>
    <property type="evidence" value="ECO:0007669"/>
    <property type="project" value="UniProtKB-UniRule"/>
</dbReference>
<dbReference type="GO" id="GO:0003723">
    <property type="term" value="F:RNA binding"/>
    <property type="evidence" value="ECO:0007669"/>
    <property type="project" value="UniProtKB-KW"/>
</dbReference>
<dbReference type="GO" id="GO:0051607">
    <property type="term" value="P:defense response to virus"/>
    <property type="evidence" value="ECO:0007669"/>
    <property type="project" value="UniProtKB-UniRule"/>
</dbReference>
<dbReference type="GO" id="GO:0043571">
    <property type="term" value="P:maintenance of CRISPR repeat elements"/>
    <property type="evidence" value="ECO:0007669"/>
    <property type="project" value="UniProtKB-UniRule"/>
</dbReference>
<dbReference type="Gene3D" id="3.30.420.10">
    <property type="entry name" value="Ribonuclease H-like superfamily/Ribonuclease H"/>
    <property type="match status" value="3"/>
</dbReference>
<dbReference type="HAMAP" id="MF_01480">
    <property type="entry name" value="Cas9"/>
    <property type="match status" value="1"/>
</dbReference>
<dbReference type="InterPro" id="IPR028629">
    <property type="entry name" value="Cas9"/>
</dbReference>
<dbReference type="InterPro" id="IPR040555">
    <property type="entry name" value="Cas9_PI2"/>
</dbReference>
<dbReference type="InterPro" id="IPR049473">
    <property type="entry name" value="Cas9_PI_C"/>
</dbReference>
<dbReference type="InterPro" id="IPR055228">
    <property type="entry name" value="Cas9_RuvC"/>
</dbReference>
<dbReference type="InterPro" id="IPR040656">
    <property type="entry name" value="Cas9_WED_dom"/>
</dbReference>
<dbReference type="InterPro" id="IPR033114">
    <property type="entry name" value="HNH_CAS9"/>
</dbReference>
<dbReference type="InterPro" id="IPR003615">
    <property type="entry name" value="HNH_nuc"/>
</dbReference>
<dbReference type="InterPro" id="IPR036397">
    <property type="entry name" value="RNaseH_sf"/>
</dbReference>
<dbReference type="NCBIfam" id="TIGR01865">
    <property type="entry name" value="cas_Csn1"/>
    <property type="match status" value="1"/>
</dbReference>
<dbReference type="Pfam" id="PF18070">
    <property type="entry name" value="Cas9_PI2"/>
    <property type="match status" value="1"/>
</dbReference>
<dbReference type="Pfam" id="PF21574">
    <property type="entry name" value="Cas9_PI_C"/>
    <property type="match status" value="1"/>
</dbReference>
<dbReference type="Pfam" id="PF22702">
    <property type="entry name" value="Cas9_RuvC"/>
    <property type="match status" value="1"/>
</dbReference>
<dbReference type="Pfam" id="PF18061">
    <property type="entry name" value="CRISPR_Cas9_WED"/>
    <property type="match status" value="1"/>
</dbReference>
<dbReference type="Pfam" id="PF13395">
    <property type="entry name" value="HNH_4"/>
    <property type="match status" value="1"/>
</dbReference>
<dbReference type="PROSITE" id="PS51749">
    <property type="entry name" value="HNH_CAS9"/>
    <property type="match status" value="1"/>
</dbReference>
<proteinExistence type="evidence at protein level"/>